<evidence type="ECO:0000256" key="1">
    <source>
        <dbReference type="SAM" id="MobiDB-lite"/>
    </source>
</evidence>
<evidence type="ECO:0000305" key="2"/>
<reference key="1">
    <citation type="journal article" date="2003" name="J. Gen. Virol.">
        <title>Complete nucleotide sequence of Pelargonium zonate spot virus and its relationship with the family Bromoviridae.</title>
        <authorList>
            <person name="Finetti-Sialer M."/>
            <person name="Gallitelli D."/>
        </authorList>
    </citation>
    <scope>NUCLEOTIDE SEQUENCE [GENOMIC RNA]</scope>
    <source>
        <strain>tomato</strain>
    </source>
</reference>
<proteinExistence type="predicted"/>
<protein>
    <recommendedName>
        <fullName>Capsid protein</fullName>
        <shortName>CP</shortName>
    </recommendedName>
    <alternativeName>
        <fullName>Coat protein</fullName>
    </alternativeName>
</protein>
<organism>
    <name type="scientific">Pelargonium zonate spot virus (isolate Tomato/Italy/1982)</name>
    <name type="common">PZSV</name>
    <name type="synonym">Pelargonium zonate spot virus (isolate Tomato)</name>
    <dbReference type="NCBI Taxonomy" id="650488"/>
    <lineage>
        <taxon>Viruses</taxon>
        <taxon>Riboviria</taxon>
        <taxon>Orthornavirae</taxon>
        <taxon>Kitrinoviricota</taxon>
        <taxon>Alsuviricetes</taxon>
        <taxon>Martellivirales</taxon>
        <taxon>Bromoviridae</taxon>
        <taxon>Anulavirus</taxon>
        <taxon>Pelargonium zonate spot virus</taxon>
    </lineage>
</organism>
<keyword id="KW-0167">Capsid protein</keyword>
<keyword id="KW-1185">Reference proteome</keyword>
<keyword id="KW-0687">Ribonucleoprotein</keyword>
<keyword id="KW-0694">RNA-binding</keyword>
<keyword id="KW-1142">T=3 icosahedral capsid protein</keyword>
<keyword id="KW-0543">Viral nucleoprotein</keyword>
<keyword id="KW-0946">Virion</keyword>
<dbReference type="EMBL" id="AJ272329">
    <property type="protein sequence ID" value="CAC08529.1"/>
    <property type="molecule type" value="Genomic_RNA"/>
</dbReference>
<dbReference type="KEGG" id="vg:956570"/>
<dbReference type="Proteomes" id="UP000000411">
    <property type="component" value="Genome"/>
</dbReference>
<dbReference type="GO" id="GO:1990904">
    <property type="term" value="C:ribonucleoprotein complex"/>
    <property type="evidence" value="ECO:0007669"/>
    <property type="project" value="UniProtKB-KW"/>
</dbReference>
<dbReference type="GO" id="GO:0039617">
    <property type="term" value="C:T=3 icosahedral viral capsid"/>
    <property type="evidence" value="ECO:0007669"/>
    <property type="project" value="UniProtKB-KW"/>
</dbReference>
<dbReference type="GO" id="GO:0019013">
    <property type="term" value="C:viral nucleocapsid"/>
    <property type="evidence" value="ECO:0007669"/>
    <property type="project" value="UniProtKB-KW"/>
</dbReference>
<dbReference type="GO" id="GO:0003723">
    <property type="term" value="F:RNA binding"/>
    <property type="evidence" value="ECO:0007669"/>
    <property type="project" value="UniProtKB-KW"/>
</dbReference>
<comment type="function">
    <text evidence="2">Capsid protein self-assembles to form a quasi spherical capsid, about 25-35 nm.</text>
</comment>
<comment type="subcellular location">
    <subcellularLocation>
        <location evidence="2">Virion</location>
    </subcellularLocation>
</comment>
<gene>
    <name type="ORF">ORF3b</name>
</gene>
<name>CAPSD_PZSVT</name>
<organismHost>
    <name type="scientific">Solanum lycopersicum</name>
    <name type="common">Tomato</name>
    <name type="synonym">Lycopersicon esculentum</name>
    <dbReference type="NCBI Taxonomy" id="4081"/>
</organismHost>
<sequence length="208" mass="23084">MPPKRQNTETRKARQNRARRSRQQALAKLAREFSGLSMSVERSPSTSWADITESESRLKLIPGFTATEVTFDPSLTFGTHTGFATAERSLTVPDALLESPNLRLNRVAVVVLLDPTVPEAHKFWCALGDRWVAPSVGSFPSNAVRITGREGKGHVIYHYPGKTVEHLAKLRVYLFATDYAIVGNNSPVATVKIFVEHEKIGQAEYIPL</sequence>
<accession>Q9DUT0</accession>
<feature type="chain" id="PRO_0000402411" description="Capsid protein">
    <location>
        <begin position="1"/>
        <end position="208"/>
    </location>
</feature>
<feature type="region of interest" description="Disordered" evidence="1">
    <location>
        <begin position="1"/>
        <end position="23"/>
    </location>
</feature>
<feature type="compositionally biased region" description="Basic and acidic residues" evidence="1">
    <location>
        <begin position="1"/>
        <end position="12"/>
    </location>
</feature>
<feature type="compositionally biased region" description="Basic residues" evidence="1">
    <location>
        <begin position="13"/>
        <end position="22"/>
    </location>
</feature>